<evidence type="ECO:0000255" key="1">
    <source>
        <dbReference type="HAMAP-Rule" id="MF_01345"/>
    </source>
</evidence>
<evidence type="ECO:0000305" key="2"/>
<keyword id="KW-1185">Reference proteome</keyword>
<keyword id="KW-0687">Ribonucleoprotein</keyword>
<keyword id="KW-0689">Ribosomal protein</keyword>
<keyword id="KW-0694">RNA-binding</keyword>
<keyword id="KW-0699">rRNA-binding</keyword>
<organism>
    <name type="scientific">Campylobacter jejuni subsp. jejuni serotype O:2 (strain ATCC 700819 / NCTC 11168)</name>
    <dbReference type="NCBI Taxonomy" id="192222"/>
    <lineage>
        <taxon>Bacteria</taxon>
        <taxon>Pseudomonadati</taxon>
        <taxon>Campylobacterota</taxon>
        <taxon>Epsilonproteobacteria</taxon>
        <taxon>Campylobacterales</taxon>
        <taxon>Campylobacteraceae</taxon>
        <taxon>Campylobacter</taxon>
    </lineage>
</organism>
<feature type="chain" id="PRO_0000233450" description="Small ribosomal subunit protein uS17">
    <location>
        <begin position="1"/>
        <end position="83"/>
    </location>
</feature>
<proteinExistence type="inferred from homology"/>
<sequence length="83" mass="9549">MAFKREIQGVVVKIAGEKTASVLVERKVVHPRYRKIVKRFKKYLIHDERNEVKVGDTVVAVECRPLSKRKSFRLKSVLATGVE</sequence>
<gene>
    <name evidence="1" type="primary">rpsQ</name>
    <name type="ordered locus">Cj1698c</name>
</gene>
<name>RS17_CAMJE</name>
<comment type="function">
    <text evidence="1">One of the primary rRNA binding proteins, it binds specifically to the 5'-end of 16S ribosomal RNA.</text>
</comment>
<comment type="subunit">
    <text evidence="1">Part of the 30S ribosomal subunit.</text>
</comment>
<comment type="similarity">
    <text evidence="1">Belongs to the universal ribosomal protein uS17 family.</text>
</comment>
<reference key="1">
    <citation type="journal article" date="2000" name="Nature">
        <title>The genome sequence of the food-borne pathogen Campylobacter jejuni reveals hypervariable sequences.</title>
        <authorList>
            <person name="Parkhill J."/>
            <person name="Wren B.W."/>
            <person name="Mungall K.L."/>
            <person name="Ketley J.M."/>
            <person name="Churcher C.M."/>
            <person name="Basham D."/>
            <person name="Chillingworth T."/>
            <person name="Davies R.M."/>
            <person name="Feltwell T."/>
            <person name="Holroyd S."/>
            <person name="Jagels K."/>
            <person name="Karlyshev A.V."/>
            <person name="Moule S."/>
            <person name="Pallen M.J."/>
            <person name="Penn C.W."/>
            <person name="Quail M.A."/>
            <person name="Rajandream M.A."/>
            <person name="Rutherford K.M."/>
            <person name="van Vliet A.H.M."/>
            <person name="Whitehead S."/>
            <person name="Barrell B.G."/>
        </authorList>
    </citation>
    <scope>NUCLEOTIDE SEQUENCE [LARGE SCALE GENOMIC DNA]</scope>
    <source>
        <strain>ATCC 700819 / NCTC 11168</strain>
    </source>
</reference>
<dbReference type="EMBL" id="AL111168">
    <property type="protein sequence ID" value="CAL35792.1"/>
    <property type="molecule type" value="Genomic_DNA"/>
</dbReference>
<dbReference type="PIR" id="F81267">
    <property type="entry name" value="F81267"/>
</dbReference>
<dbReference type="RefSeq" id="WP_002851549.1">
    <property type="nucleotide sequence ID" value="NZ_SZUC01000002.1"/>
</dbReference>
<dbReference type="RefSeq" id="YP_002345064.1">
    <property type="nucleotide sequence ID" value="NC_002163.1"/>
</dbReference>
<dbReference type="SMR" id="Q9PLY0"/>
<dbReference type="IntAct" id="Q9PLY0">
    <property type="interactions" value="10"/>
</dbReference>
<dbReference type="STRING" id="192222.Cj1698c"/>
<dbReference type="PaxDb" id="192222-Cj1698c"/>
<dbReference type="EnsemblBacteria" id="CAL35792">
    <property type="protein sequence ID" value="CAL35792"/>
    <property type="gene ID" value="Cj1698c"/>
</dbReference>
<dbReference type="GeneID" id="905972"/>
<dbReference type="KEGG" id="cje:Cj1698c"/>
<dbReference type="PATRIC" id="fig|192222.6.peg.1672"/>
<dbReference type="eggNOG" id="COG0186">
    <property type="taxonomic scope" value="Bacteria"/>
</dbReference>
<dbReference type="HOGENOM" id="CLU_073626_1_1_7"/>
<dbReference type="OrthoDB" id="9811714at2"/>
<dbReference type="Proteomes" id="UP000000799">
    <property type="component" value="Chromosome"/>
</dbReference>
<dbReference type="GO" id="GO:0022627">
    <property type="term" value="C:cytosolic small ribosomal subunit"/>
    <property type="evidence" value="ECO:0007669"/>
    <property type="project" value="TreeGrafter"/>
</dbReference>
<dbReference type="GO" id="GO:0019843">
    <property type="term" value="F:rRNA binding"/>
    <property type="evidence" value="ECO:0007669"/>
    <property type="project" value="UniProtKB-UniRule"/>
</dbReference>
<dbReference type="GO" id="GO:0003735">
    <property type="term" value="F:structural constituent of ribosome"/>
    <property type="evidence" value="ECO:0007669"/>
    <property type="project" value="InterPro"/>
</dbReference>
<dbReference type="GO" id="GO:0006412">
    <property type="term" value="P:translation"/>
    <property type="evidence" value="ECO:0007669"/>
    <property type="project" value="UniProtKB-UniRule"/>
</dbReference>
<dbReference type="CDD" id="cd00364">
    <property type="entry name" value="Ribosomal_uS17"/>
    <property type="match status" value="1"/>
</dbReference>
<dbReference type="Gene3D" id="2.40.50.140">
    <property type="entry name" value="Nucleic acid-binding proteins"/>
    <property type="match status" value="1"/>
</dbReference>
<dbReference type="HAMAP" id="MF_01345_B">
    <property type="entry name" value="Ribosomal_uS17_B"/>
    <property type="match status" value="1"/>
</dbReference>
<dbReference type="InterPro" id="IPR012340">
    <property type="entry name" value="NA-bd_OB-fold"/>
</dbReference>
<dbReference type="InterPro" id="IPR000266">
    <property type="entry name" value="Ribosomal_uS17"/>
</dbReference>
<dbReference type="InterPro" id="IPR019984">
    <property type="entry name" value="Ribosomal_uS17_bact/chlr"/>
</dbReference>
<dbReference type="InterPro" id="IPR019979">
    <property type="entry name" value="Ribosomal_uS17_CS"/>
</dbReference>
<dbReference type="NCBIfam" id="NF004123">
    <property type="entry name" value="PRK05610.1"/>
    <property type="match status" value="1"/>
</dbReference>
<dbReference type="NCBIfam" id="TIGR03635">
    <property type="entry name" value="uS17_bact"/>
    <property type="match status" value="1"/>
</dbReference>
<dbReference type="PANTHER" id="PTHR10744">
    <property type="entry name" value="40S RIBOSOMAL PROTEIN S11 FAMILY MEMBER"/>
    <property type="match status" value="1"/>
</dbReference>
<dbReference type="PANTHER" id="PTHR10744:SF1">
    <property type="entry name" value="SMALL RIBOSOMAL SUBUNIT PROTEIN US17M"/>
    <property type="match status" value="1"/>
</dbReference>
<dbReference type="Pfam" id="PF00366">
    <property type="entry name" value="Ribosomal_S17"/>
    <property type="match status" value="1"/>
</dbReference>
<dbReference type="PRINTS" id="PR00973">
    <property type="entry name" value="RIBOSOMALS17"/>
</dbReference>
<dbReference type="SUPFAM" id="SSF50249">
    <property type="entry name" value="Nucleic acid-binding proteins"/>
    <property type="match status" value="1"/>
</dbReference>
<dbReference type="PROSITE" id="PS00056">
    <property type="entry name" value="RIBOSOMAL_S17"/>
    <property type="match status" value="1"/>
</dbReference>
<protein>
    <recommendedName>
        <fullName evidence="1">Small ribosomal subunit protein uS17</fullName>
    </recommendedName>
    <alternativeName>
        <fullName evidence="2">30S ribosomal protein S17</fullName>
    </alternativeName>
</protein>
<accession>Q9PLY0</accession>
<accession>Q0P7T3</accession>